<protein>
    <recommendedName>
        <fullName evidence="1">Asparagine--tRNA ligase</fullName>
        <ecNumber evidence="1">6.1.1.22</ecNumber>
    </recommendedName>
    <alternativeName>
        <fullName evidence="1">Asparaginyl-tRNA synthetase</fullName>
        <shortName evidence="1">AsnRS</shortName>
    </alternativeName>
</protein>
<name>SYN_BACLD</name>
<gene>
    <name evidence="1" type="primary">asnS</name>
    <name type="ordered locus">BLi02371</name>
    <name type="ordered locus">BL02745</name>
</gene>
<feature type="chain" id="PRO_1000051378" description="Asparagine--tRNA ligase">
    <location>
        <begin position="1"/>
        <end position="430"/>
    </location>
</feature>
<organism>
    <name type="scientific">Bacillus licheniformis (strain ATCC 14580 / DSM 13 / JCM 2505 / CCUG 7422 / NBRC 12200 / NCIMB 9375 / NCTC 10341 / NRRL NRS-1264 / Gibson 46)</name>
    <dbReference type="NCBI Taxonomy" id="279010"/>
    <lineage>
        <taxon>Bacteria</taxon>
        <taxon>Bacillati</taxon>
        <taxon>Bacillota</taxon>
        <taxon>Bacilli</taxon>
        <taxon>Bacillales</taxon>
        <taxon>Bacillaceae</taxon>
        <taxon>Bacillus</taxon>
    </lineage>
</organism>
<dbReference type="EC" id="6.1.1.22" evidence="1"/>
<dbReference type="EMBL" id="CP000002">
    <property type="protein sequence ID" value="AAU23897.1"/>
    <property type="molecule type" value="Genomic_DNA"/>
</dbReference>
<dbReference type="EMBL" id="AE017333">
    <property type="protein sequence ID" value="AAU41251.1"/>
    <property type="molecule type" value="Genomic_DNA"/>
</dbReference>
<dbReference type="RefSeq" id="WP_003182907.1">
    <property type="nucleotide sequence ID" value="NC_006322.1"/>
</dbReference>
<dbReference type="SMR" id="Q65I63"/>
<dbReference type="STRING" id="279010.BL02745"/>
<dbReference type="GeneID" id="92861030"/>
<dbReference type="KEGG" id="bld:BLi02371"/>
<dbReference type="KEGG" id="bli:BL02745"/>
<dbReference type="eggNOG" id="COG0017">
    <property type="taxonomic scope" value="Bacteria"/>
</dbReference>
<dbReference type="HOGENOM" id="CLU_004553_2_0_9"/>
<dbReference type="Proteomes" id="UP000000606">
    <property type="component" value="Chromosome"/>
</dbReference>
<dbReference type="Bgee" id="BL02745">
    <property type="expression patterns" value="Expressed in pharyngeal slit and 4 other cell types or tissues"/>
</dbReference>
<dbReference type="GO" id="GO:0005737">
    <property type="term" value="C:cytoplasm"/>
    <property type="evidence" value="ECO:0007669"/>
    <property type="project" value="UniProtKB-SubCell"/>
</dbReference>
<dbReference type="GO" id="GO:0004816">
    <property type="term" value="F:asparagine-tRNA ligase activity"/>
    <property type="evidence" value="ECO:0007669"/>
    <property type="project" value="UniProtKB-UniRule"/>
</dbReference>
<dbReference type="GO" id="GO:0005524">
    <property type="term" value="F:ATP binding"/>
    <property type="evidence" value="ECO:0007669"/>
    <property type="project" value="UniProtKB-UniRule"/>
</dbReference>
<dbReference type="GO" id="GO:0140096">
    <property type="term" value="F:catalytic activity, acting on a protein"/>
    <property type="evidence" value="ECO:0007669"/>
    <property type="project" value="UniProtKB-ARBA"/>
</dbReference>
<dbReference type="GO" id="GO:0003676">
    <property type="term" value="F:nucleic acid binding"/>
    <property type="evidence" value="ECO:0007669"/>
    <property type="project" value="InterPro"/>
</dbReference>
<dbReference type="GO" id="GO:0016740">
    <property type="term" value="F:transferase activity"/>
    <property type="evidence" value="ECO:0007669"/>
    <property type="project" value="UniProtKB-ARBA"/>
</dbReference>
<dbReference type="GO" id="GO:0006421">
    <property type="term" value="P:asparaginyl-tRNA aminoacylation"/>
    <property type="evidence" value="ECO:0007669"/>
    <property type="project" value="UniProtKB-UniRule"/>
</dbReference>
<dbReference type="CDD" id="cd04323">
    <property type="entry name" value="AsnRS_cyto_like_N"/>
    <property type="match status" value="1"/>
</dbReference>
<dbReference type="CDD" id="cd00776">
    <property type="entry name" value="AsxRS_core"/>
    <property type="match status" value="1"/>
</dbReference>
<dbReference type="Gene3D" id="3.30.930.10">
    <property type="entry name" value="Bira Bifunctional Protein, Domain 2"/>
    <property type="match status" value="1"/>
</dbReference>
<dbReference type="Gene3D" id="2.40.50.140">
    <property type="entry name" value="Nucleic acid-binding proteins"/>
    <property type="match status" value="1"/>
</dbReference>
<dbReference type="HAMAP" id="MF_00534">
    <property type="entry name" value="Asn_tRNA_synth"/>
    <property type="match status" value="1"/>
</dbReference>
<dbReference type="InterPro" id="IPR004364">
    <property type="entry name" value="Aa-tRNA-synt_II"/>
</dbReference>
<dbReference type="InterPro" id="IPR006195">
    <property type="entry name" value="aa-tRNA-synth_II"/>
</dbReference>
<dbReference type="InterPro" id="IPR045864">
    <property type="entry name" value="aa-tRNA-synth_II/BPL/LPL"/>
</dbReference>
<dbReference type="InterPro" id="IPR004522">
    <property type="entry name" value="Asn-tRNA-ligase"/>
</dbReference>
<dbReference type="InterPro" id="IPR002312">
    <property type="entry name" value="Asp/Asn-tRNA-synth_IIb"/>
</dbReference>
<dbReference type="InterPro" id="IPR012340">
    <property type="entry name" value="NA-bd_OB-fold"/>
</dbReference>
<dbReference type="InterPro" id="IPR004365">
    <property type="entry name" value="NA-bd_OB_tRNA"/>
</dbReference>
<dbReference type="NCBIfam" id="TIGR00457">
    <property type="entry name" value="asnS"/>
    <property type="match status" value="1"/>
</dbReference>
<dbReference type="NCBIfam" id="NF003037">
    <property type="entry name" value="PRK03932.1"/>
    <property type="match status" value="1"/>
</dbReference>
<dbReference type="NCBIfam" id="NF003483">
    <property type="entry name" value="PRK05159.1"/>
    <property type="match status" value="1"/>
</dbReference>
<dbReference type="PANTHER" id="PTHR22594:SF34">
    <property type="entry name" value="ASPARAGINE--TRNA LIGASE, MITOCHONDRIAL-RELATED"/>
    <property type="match status" value="1"/>
</dbReference>
<dbReference type="PANTHER" id="PTHR22594">
    <property type="entry name" value="ASPARTYL/LYSYL-TRNA SYNTHETASE"/>
    <property type="match status" value="1"/>
</dbReference>
<dbReference type="Pfam" id="PF00152">
    <property type="entry name" value="tRNA-synt_2"/>
    <property type="match status" value="1"/>
</dbReference>
<dbReference type="Pfam" id="PF01336">
    <property type="entry name" value="tRNA_anti-codon"/>
    <property type="match status" value="1"/>
</dbReference>
<dbReference type="PRINTS" id="PR01042">
    <property type="entry name" value="TRNASYNTHASP"/>
</dbReference>
<dbReference type="SUPFAM" id="SSF55681">
    <property type="entry name" value="Class II aaRS and biotin synthetases"/>
    <property type="match status" value="1"/>
</dbReference>
<dbReference type="SUPFAM" id="SSF50249">
    <property type="entry name" value="Nucleic acid-binding proteins"/>
    <property type="match status" value="1"/>
</dbReference>
<dbReference type="PROSITE" id="PS50862">
    <property type="entry name" value="AA_TRNA_LIGASE_II"/>
    <property type="match status" value="1"/>
</dbReference>
<proteinExistence type="inferred from homology"/>
<keyword id="KW-0030">Aminoacyl-tRNA synthetase</keyword>
<keyword id="KW-0067">ATP-binding</keyword>
<keyword id="KW-0963">Cytoplasm</keyword>
<keyword id="KW-0436">Ligase</keyword>
<keyword id="KW-0547">Nucleotide-binding</keyword>
<keyword id="KW-0648">Protein biosynthesis</keyword>
<keyword id="KW-1185">Reference proteome</keyword>
<accession>Q65I63</accession>
<accession>Q62TL2</accession>
<sequence>MKTTINQVYKHVGEEVTIGAWIANKRSSGKIAFLQLRDGTGFIQGVVVKAEVDEETFQTAKSVTQETSLYVKGVVKEDERSPLGYELAVTSLEVIHEATDYPITPKEHGTEFLMDHRHLWLRSKRQHATMKIRNEIIRATYEFFNKEGFVKVDPPILTGSAPEGTTELFATKYFDEDAYLSQSGQLYMEAAAMALGKVFSFGPTFRAEKSKTKRHLIEFWMIEPEMAFVEFNENLEVQENYVSFIVQSVLENCKIELNTLGRDTSKLELIKAPFPRITYDEAIQFLKEKGFDDIEWGDDFGAPHETAIAESYDKPVFITHYPTSLKPFYMQPAPDREDVVLCADLIAPEGYGEIIGGSERIHDLELLEARLKEHGLESDAYQWYAELRKYGSVPHSGFGLGLERTVAWICGSPHVRETIPFPRLLNRLYP</sequence>
<evidence type="ECO:0000255" key="1">
    <source>
        <dbReference type="HAMAP-Rule" id="MF_00534"/>
    </source>
</evidence>
<comment type="catalytic activity">
    <reaction evidence="1">
        <text>tRNA(Asn) + L-asparagine + ATP = L-asparaginyl-tRNA(Asn) + AMP + diphosphate + H(+)</text>
        <dbReference type="Rhea" id="RHEA:11180"/>
        <dbReference type="Rhea" id="RHEA-COMP:9659"/>
        <dbReference type="Rhea" id="RHEA-COMP:9674"/>
        <dbReference type="ChEBI" id="CHEBI:15378"/>
        <dbReference type="ChEBI" id="CHEBI:30616"/>
        <dbReference type="ChEBI" id="CHEBI:33019"/>
        <dbReference type="ChEBI" id="CHEBI:58048"/>
        <dbReference type="ChEBI" id="CHEBI:78442"/>
        <dbReference type="ChEBI" id="CHEBI:78515"/>
        <dbReference type="ChEBI" id="CHEBI:456215"/>
        <dbReference type="EC" id="6.1.1.22"/>
    </reaction>
</comment>
<comment type="subunit">
    <text evidence="1">Homodimer.</text>
</comment>
<comment type="subcellular location">
    <subcellularLocation>
        <location evidence="1">Cytoplasm</location>
    </subcellularLocation>
</comment>
<comment type="similarity">
    <text evidence="1">Belongs to the class-II aminoacyl-tRNA synthetase family.</text>
</comment>
<reference key="1">
    <citation type="journal article" date="2004" name="J. Mol. Microbiol. Biotechnol.">
        <title>The complete genome sequence of Bacillus licheniformis DSM13, an organism with great industrial potential.</title>
        <authorList>
            <person name="Veith B."/>
            <person name="Herzberg C."/>
            <person name="Steckel S."/>
            <person name="Feesche J."/>
            <person name="Maurer K.H."/>
            <person name="Ehrenreich P."/>
            <person name="Baeumer S."/>
            <person name="Henne A."/>
            <person name="Liesegang H."/>
            <person name="Merkl R."/>
            <person name="Ehrenreich A."/>
            <person name="Gottschalk G."/>
        </authorList>
    </citation>
    <scope>NUCLEOTIDE SEQUENCE [LARGE SCALE GENOMIC DNA]</scope>
    <source>
        <strain>ATCC 14580 / DSM 13 / JCM 2505 / CCUG 7422 / NBRC 12200 / NCIMB 9375 / NCTC 10341 / NRRL NRS-1264 / Gibson 46</strain>
    </source>
</reference>
<reference key="2">
    <citation type="journal article" date="2004" name="Genome Biol.">
        <title>Complete genome sequence of the industrial bacterium Bacillus licheniformis and comparisons with closely related Bacillus species.</title>
        <authorList>
            <person name="Rey M.W."/>
            <person name="Ramaiya P."/>
            <person name="Nelson B.A."/>
            <person name="Brody-Karpin S.D."/>
            <person name="Zaretsky E.J."/>
            <person name="Tang M."/>
            <person name="Lopez de Leon A."/>
            <person name="Xiang H."/>
            <person name="Gusti V."/>
            <person name="Clausen I.G."/>
            <person name="Olsen P.B."/>
            <person name="Rasmussen M.D."/>
            <person name="Andersen J.T."/>
            <person name="Joergensen P.L."/>
            <person name="Larsen T.S."/>
            <person name="Sorokin A."/>
            <person name="Bolotin A."/>
            <person name="Lapidus A."/>
            <person name="Galleron N."/>
            <person name="Ehrlich S.D."/>
            <person name="Berka R.M."/>
        </authorList>
    </citation>
    <scope>NUCLEOTIDE SEQUENCE [LARGE SCALE GENOMIC DNA]</scope>
    <source>
        <strain>ATCC 14580 / DSM 13 / JCM 2505 / CCUG 7422 / NBRC 12200 / NCIMB 9375 / NCTC 10341 / NRRL NRS-1264 / Gibson 46</strain>
    </source>
</reference>